<organism>
    <name type="scientific">Shigella boydii serotype 4 (strain Sb227)</name>
    <dbReference type="NCBI Taxonomy" id="300268"/>
    <lineage>
        <taxon>Bacteria</taxon>
        <taxon>Pseudomonadati</taxon>
        <taxon>Pseudomonadota</taxon>
        <taxon>Gammaproteobacteria</taxon>
        <taxon>Enterobacterales</taxon>
        <taxon>Enterobacteriaceae</taxon>
        <taxon>Shigella</taxon>
    </lineage>
</organism>
<keyword id="KW-0408">Iron</keyword>
<keyword id="KW-0456">Lyase</keyword>
<keyword id="KW-0464">Manganese</keyword>
<feature type="chain" id="PRO_0000231056" description="Mannonate dehydratase">
    <location>
        <begin position="1"/>
        <end position="394"/>
    </location>
</feature>
<name>UXUA_SHIBS</name>
<gene>
    <name evidence="1" type="primary">uxuA</name>
    <name type="ordered locus">SBO_4373</name>
</gene>
<protein>
    <recommendedName>
        <fullName evidence="1">Mannonate dehydratase</fullName>
        <ecNumber evidence="1">4.2.1.8</ecNumber>
    </recommendedName>
    <alternativeName>
        <fullName evidence="1">D-mannonate hydro-lyase</fullName>
    </alternativeName>
</protein>
<comment type="function">
    <text evidence="1">Catalyzes the dehydration of D-mannonate.</text>
</comment>
<comment type="catalytic activity">
    <reaction evidence="1">
        <text>D-mannonate = 2-dehydro-3-deoxy-D-gluconate + H2O</text>
        <dbReference type="Rhea" id="RHEA:20097"/>
        <dbReference type="ChEBI" id="CHEBI:15377"/>
        <dbReference type="ChEBI" id="CHEBI:17767"/>
        <dbReference type="ChEBI" id="CHEBI:57990"/>
        <dbReference type="EC" id="4.2.1.8"/>
    </reaction>
</comment>
<comment type="cofactor">
    <cofactor evidence="1">
        <name>Fe(2+)</name>
        <dbReference type="ChEBI" id="CHEBI:29033"/>
    </cofactor>
    <cofactor evidence="1">
        <name>Mn(2+)</name>
        <dbReference type="ChEBI" id="CHEBI:29035"/>
    </cofactor>
</comment>
<comment type="pathway">
    <text evidence="1">Carbohydrate metabolism; pentose and glucuronate interconversion.</text>
</comment>
<comment type="similarity">
    <text evidence="1">Belongs to the mannonate dehydratase family.</text>
</comment>
<proteinExistence type="inferred from homology"/>
<accession>Q31T20</accession>
<evidence type="ECO:0000255" key="1">
    <source>
        <dbReference type="HAMAP-Rule" id="MF_00106"/>
    </source>
</evidence>
<reference key="1">
    <citation type="journal article" date="2005" name="Nucleic Acids Res.">
        <title>Genome dynamics and diversity of Shigella species, the etiologic agents of bacillary dysentery.</title>
        <authorList>
            <person name="Yang F."/>
            <person name="Yang J."/>
            <person name="Zhang X."/>
            <person name="Chen L."/>
            <person name="Jiang Y."/>
            <person name="Yan Y."/>
            <person name="Tang X."/>
            <person name="Wang J."/>
            <person name="Xiong Z."/>
            <person name="Dong J."/>
            <person name="Xue Y."/>
            <person name="Zhu Y."/>
            <person name="Xu X."/>
            <person name="Sun L."/>
            <person name="Chen S."/>
            <person name="Nie H."/>
            <person name="Peng J."/>
            <person name="Xu J."/>
            <person name="Wang Y."/>
            <person name="Yuan Z."/>
            <person name="Wen Y."/>
            <person name="Yao Z."/>
            <person name="Shen Y."/>
            <person name="Qiang B."/>
            <person name="Hou Y."/>
            <person name="Yu J."/>
            <person name="Jin Q."/>
        </authorList>
    </citation>
    <scope>NUCLEOTIDE SEQUENCE [LARGE SCALE GENOMIC DNA]</scope>
    <source>
        <strain>Sb227</strain>
    </source>
</reference>
<dbReference type="EC" id="4.2.1.8" evidence="1"/>
<dbReference type="EMBL" id="CP000036">
    <property type="protein sequence ID" value="ABB68788.1"/>
    <property type="molecule type" value="Genomic_DNA"/>
</dbReference>
<dbReference type="RefSeq" id="WP_000438559.1">
    <property type="nucleotide sequence ID" value="NC_007613.1"/>
</dbReference>
<dbReference type="SMR" id="Q31T20"/>
<dbReference type="KEGG" id="sbo:SBO_4373"/>
<dbReference type="HOGENOM" id="CLU_058621_2_0_6"/>
<dbReference type="UniPathway" id="UPA00246"/>
<dbReference type="Proteomes" id="UP000007067">
    <property type="component" value="Chromosome"/>
</dbReference>
<dbReference type="GO" id="GO:0008198">
    <property type="term" value="F:ferrous iron binding"/>
    <property type="evidence" value="ECO:0007669"/>
    <property type="project" value="TreeGrafter"/>
</dbReference>
<dbReference type="GO" id="GO:0030145">
    <property type="term" value="F:manganese ion binding"/>
    <property type="evidence" value="ECO:0007669"/>
    <property type="project" value="TreeGrafter"/>
</dbReference>
<dbReference type="GO" id="GO:0008927">
    <property type="term" value="F:mannonate dehydratase activity"/>
    <property type="evidence" value="ECO:0007669"/>
    <property type="project" value="UniProtKB-UniRule"/>
</dbReference>
<dbReference type="GO" id="GO:0042840">
    <property type="term" value="P:D-glucuronate catabolic process"/>
    <property type="evidence" value="ECO:0007669"/>
    <property type="project" value="TreeGrafter"/>
</dbReference>
<dbReference type="FunFam" id="3.20.20.150:FF:000004">
    <property type="entry name" value="Mannonate dehydratase"/>
    <property type="match status" value="1"/>
</dbReference>
<dbReference type="FunFam" id="3.20.20.150:FF:000005">
    <property type="entry name" value="Mannonate dehydratase"/>
    <property type="match status" value="1"/>
</dbReference>
<dbReference type="Gene3D" id="3.20.20.150">
    <property type="entry name" value="Divalent-metal-dependent TIM barrel enzymes"/>
    <property type="match status" value="2"/>
</dbReference>
<dbReference type="HAMAP" id="MF_00106">
    <property type="entry name" value="UxuA"/>
    <property type="match status" value="1"/>
</dbReference>
<dbReference type="InterPro" id="IPR004628">
    <property type="entry name" value="Man_deHydtase"/>
</dbReference>
<dbReference type="InterPro" id="IPR036237">
    <property type="entry name" value="Xyl_isomerase-like_sf"/>
</dbReference>
<dbReference type="NCBIfam" id="NF003027">
    <property type="entry name" value="PRK03906.1"/>
    <property type="match status" value="1"/>
</dbReference>
<dbReference type="NCBIfam" id="TIGR00695">
    <property type="entry name" value="uxuA"/>
    <property type="match status" value="1"/>
</dbReference>
<dbReference type="PANTHER" id="PTHR30387">
    <property type="entry name" value="MANNONATE DEHYDRATASE"/>
    <property type="match status" value="1"/>
</dbReference>
<dbReference type="PANTHER" id="PTHR30387:SF2">
    <property type="entry name" value="MANNONATE DEHYDRATASE"/>
    <property type="match status" value="1"/>
</dbReference>
<dbReference type="Pfam" id="PF03786">
    <property type="entry name" value="UxuA"/>
    <property type="match status" value="1"/>
</dbReference>
<dbReference type="PIRSF" id="PIRSF016049">
    <property type="entry name" value="Man_dehyd"/>
    <property type="match status" value="1"/>
</dbReference>
<dbReference type="SUPFAM" id="SSF51658">
    <property type="entry name" value="Xylose isomerase-like"/>
    <property type="match status" value="1"/>
</dbReference>
<sequence>MEQTWRWYGPNDLVSLADVRQAGATGVVTALHHIPNGEVWSVEEILKRKAIVEDAGLVWSVVESVPIHEDIKTHTGNYEQWIANYQQTLRNLAQCGIRTVCYNFMPVLDWTRTDLEYVLPDGSKALRFDQIEFAAFEMHILKRPGAEADYTEEEIAQAAERFATMSDEDKARLTRNIIAGLPGAEEGYTLDQFRKHLELYKDIDKAKLRENFAVFLKAIIPVAEEVGVRMAVHPDDPPRPILGLPRIVSTIEDMQWMVDTVNSMANGFTMCTGSYGVRADNDLVDMIKQFGPRIYFTHLRSTMREDNPKTFHEAAHLNGDVDMYEVVKAIVEEEHRRKAEGKEDLIPMRPDHGHQMLDDLKKKTNPGYSAIGRLKGLAEVRGVELAIQRAFFSR</sequence>